<accession>A1RQ03</accession>
<evidence type="ECO:0000255" key="1">
    <source>
        <dbReference type="HAMAP-Rule" id="MF_01848"/>
    </source>
</evidence>
<evidence type="ECO:0000256" key="2">
    <source>
        <dbReference type="SAM" id="MobiDB-lite"/>
    </source>
</evidence>
<dbReference type="EC" id="2.1.1.181" evidence="1"/>
<dbReference type="EMBL" id="CP000503">
    <property type="protein sequence ID" value="ABM26748.1"/>
    <property type="molecule type" value="Genomic_DNA"/>
</dbReference>
<dbReference type="RefSeq" id="WP_011791170.1">
    <property type="nucleotide sequence ID" value="NC_008750.1"/>
</dbReference>
<dbReference type="SMR" id="A1RQ03"/>
<dbReference type="KEGG" id="shw:Sputw3181_3944"/>
<dbReference type="HOGENOM" id="CLU_027534_3_0_6"/>
<dbReference type="Proteomes" id="UP000002597">
    <property type="component" value="Chromosome"/>
</dbReference>
<dbReference type="GO" id="GO:0005737">
    <property type="term" value="C:cytoplasm"/>
    <property type="evidence" value="ECO:0007669"/>
    <property type="project" value="UniProtKB-SubCell"/>
</dbReference>
<dbReference type="GO" id="GO:0052907">
    <property type="term" value="F:23S rRNA (adenine(1618)-N(6))-methyltransferase activity"/>
    <property type="evidence" value="ECO:0007669"/>
    <property type="project" value="UniProtKB-EC"/>
</dbReference>
<dbReference type="GO" id="GO:0070475">
    <property type="term" value="P:rRNA base methylation"/>
    <property type="evidence" value="ECO:0007669"/>
    <property type="project" value="TreeGrafter"/>
</dbReference>
<dbReference type="CDD" id="cd02440">
    <property type="entry name" value="AdoMet_MTases"/>
    <property type="match status" value="1"/>
</dbReference>
<dbReference type="Gene3D" id="3.40.50.150">
    <property type="entry name" value="Vaccinia Virus protein VP39"/>
    <property type="match status" value="1"/>
</dbReference>
<dbReference type="HAMAP" id="MF_01848">
    <property type="entry name" value="23SrRNA_methyltr_F"/>
    <property type="match status" value="1"/>
</dbReference>
<dbReference type="InterPro" id="IPR010286">
    <property type="entry name" value="METTL16/RlmF"/>
</dbReference>
<dbReference type="InterPro" id="IPR016909">
    <property type="entry name" value="rRNA_lsu_MeTfrase_F"/>
</dbReference>
<dbReference type="InterPro" id="IPR029063">
    <property type="entry name" value="SAM-dependent_MTases_sf"/>
</dbReference>
<dbReference type="NCBIfam" id="NF008725">
    <property type="entry name" value="PRK11727.1"/>
    <property type="match status" value="1"/>
</dbReference>
<dbReference type="PANTHER" id="PTHR13393:SF0">
    <property type="entry name" value="RNA N6-ADENOSINE-METHYLTRANSFERASE METTL16"/>
    <property type="match status" value="1"/>
</dbReference>
<dbReference type="PANTHER" id="PTHR13393">
    <property type="entry name" value="SAM-DEPENDENT METHYLTRANSFERASE"/>
    <property type="match status" value="1"/>
</dbReference>
<dbReference type="Pfam" id="PF05971">
    <property type="entry name" value="Methyltransf_10"/>
    <property type="match status" value="1"/>
</dbReference>
<dbReference type="PIRSF" id="PIRSF029038">
    <property type="entry name" value="Mtase_YbiN_prd"/>
    <property type="match status" value="1"/>
</dbReference>
<dbReference type="SUPFAM" id="SSF53335">
    <property type="entry name" value="S-adenosyl-L-methionine-dependent methyltransferases"/>
    <property type="match status" value="1"/>
</dbReference>
<comment type="function">
    <text evidence="1">Specifically methylates the adenine in position 1618 of 23S rRNA.</text>
</comment>
<comment type="catalytic activity">
    <reaction evidence="1">
        <text>adenosine(1618) in 23S rRNA + S-adenosyl-L-methionine = N(6)-methyladenosine(1618) in 23S rRNA + S-adenosyl-L-homocysteine + H(+)</text>
        <dbReference type="Rhea" id="RHEA:16497"/>
        <dbReference type="Rhea" id="RHEA-COMP:10229"/>
        <dbReference type="Rhea" id="RHEA-COMP:10231"/>
        <dbReference type="ChEBI" id="CHEBI:15378"/>
        <dbReference type="ChEBI" id="CHEBI:57856"/>
        <dbReference type="ChEBI" id="CHEBI:59789"/>
        <dbReference type="ChEBI" id="CHEBI:74411"/>
        <dbReference type="ChEBI" id="CHEBI:74449"/>
        <dbReference type="EC" id="2.1.1.181"/>
    </reaction>
</comment>
<comment type="subcellular location">
    <subcellularLocation>
        <location evidence="1">Cytoplasm</location>
    </subcellularLocation>
</comment>
<comment type="similarity">
    <text evidence="1">Belongs to the methyltransferase superfamily. METTL16/RlmF family.</text>
</comment>
<organism>
    <name type="scientific">Shewanella sp. (strain W3-18-1)</name>
    <dbReference type="NCBI Taxonomy" id="351745"/>
    <lineage>
        <taxon>Bacteria</taxon>
        <taxon>Pseudomonadati</taxon>
        <taxon>Pseudomonadota</taxon>
        <taxon>Gammaproteobacteria</taxon>
        <taxon>Alteromonadales</taxon>
        <taxon>Shewanellaceae</taxon>
        <taxon>Shewanella</taxon>
    </lineage>
</organism>
<sequence>MPKPPRSTQILSCNAPNGKPKTQHPSARAKVKRTPVNTRSIAEIKKALHPRNVHINGYDFNALIKAFPRLNAFVRPTSFGGLSIDFADPEAVKTLNTALLKHHYGIDFWDIPKGALCPPIPGRVDYLHYLADLLAEGDHHLVMDRVSVLDIGTGANGIYPILGCQVFGWHFVASDINSISLANVQGIIAQNPALHGRLNLRLQGDESAIFKGVIQPQERFELTLCNPPFHASLAEAAEGSLRKVRNLQLNRGRTAKPVAKLNFGGQGAELWCQGGEPQFLATMIDESQAFADQCLWFTSLVSKKENLKPCYQALAKLAVDTVKTIEMQQGNKMTRILAWSFQSAAKRKIWRNAHLSD</sequence>
<reference key="1">
    <citation type="submission" date="2006-12" db="EMBL/GenBank/DDBJ databases">
        <title>Complete sequence of Shewanella sp. W3-18-1.</title>
        <authorList>
            <consortium name="US DOE Joint Genome Institute"/>
            <person name="Copeland A."/>
            <person name="Lucas S."/>
            <person name="Lapidus A."/>
            <person name="Barry K."/>
            <person name="Detter J.C."/>
            <person name="Glavina del Rio T."/>
            <person name="Hammon N."/>
            <person name="Israni S."/>
            <person name="Dalin E."/>
            <person name="Tice H."/>
            <person name="Pitluck S."/>
            <person name="Chain P."/>
            <person name="Malfatti S."/>
            <person name="Shin M."/>
            <person name="Vergez L."/>
            <person name="Schmutz J."/>
            <person name="Larimer F."/>
            <person name="Land M."/>
            <person name="Hauser L."/>
            <person name="Kyrpides N."/>
            <person name="Lykidis A."/>
            <person name="Tiedje J."/>
            <person name="Richardson P."/>
        </authorList>
    </citation>
    <scope>NUCLEOTIDE SEQUENCE [LARGE SCALE GENOMIC DNA]</scope>
    <source>
        <strain>W3-18-1</strain>
    </source>
</reference>
<feature type="chain" id="PRO_0000349965" description="Ribosomal RNA large subunit methyltransferase F">
    <location>
        <begin position="1"/>
        <end position="357"/>
    </location>
</feature>
<feature type="region of interest" description="Disordered" evidence="2">
    <location>
        <begin position="1"/>
        <end position="33"/>
    </location>
</feature>
<feature type="compositionally biased region" description="Polar residues" evidence="2">
    <location>
        <begin position="1"/>
        <end position="15"/>
    </location>
</feature>
<gene>
    <name evidence="1" type="primary">rlmF</name>
    <name type="ordered locus">Sputw3181_3944</name>
</gene>
<proteinExistence type="inferred from homology"/>
<keyword id="KW-0963">Cytoplasm</keyword>
<keyword id="KW-0489">Methyltransferase</keyword>
<keyword id="KW-0698">rRNA processing</keyword>
<keyword id="KW-0949">S-adenosyl-L-methionine</keyword>
<keyword id="KW-0808">Transferase</keyword>
<name>RLMF_SHESW</name>
<protein>
    <recommendedName>
        <fullName evidence="1">Ribosomal RNA large subunit methyltransferase F</fullName>
        <ecNumber evidence="1">2.1.1.181</ecNumber>
    </recommendedName>
    <alternativeName>
        <fullName evidence="1">23S rRNA mA1618 methyltransferase</fullName>
    </alternativeName>
    <alternativeName>
        <fullName evidence="1">rRNA adenine N-6-methyltransferase</fullName>
    </alternativeName>
</protein>